<keyword id="KW-0665">Pyrimidine biosynthesis</keyword>
<keyword id="KW-0808">Transferase</keyword>
<gene>
    <name evidence="1" type="primary">pyrB</name>
    <name type="ordered locus">Mext_3312</name>
</gene>
<accession>A9W737</accession>
<reference key="1">
    <citation type="submission" date="2007-12" db="EMBL/GenBank/DDBJ databases">
        <title>Complete sequence of Methylobacterium extorquens PA1.</title>
        <authorList>
            <consortium name="US DOE Joint Genome Institute"/>
            <person name="Copeland A."/>
            <person name="Lucas S."/>
            <person name="Lapidus A."/>
            <person name="Barry K."/>
            <person name="Glavina del Rio T."/>
            <person name="Dalin E."/>
            <person name="Tice H."/>
            <person name="Pitluck S."/>
            <person name="Saunders E."/>
            <person name="Brettin T."/>
            <person name="Bruce D."/>
            <person name="Detter J.C."/>
            <person name="Han C."/>
            <person name="Schmutz J."/>
            <person name="Larimer F."/>
            <person name="Land M."/>
            <person name="Hauser L."/>
            <person name="Kyrpides N."/>
            <person name="Kim E."/>
            <person name="Marx C."/>
            <person name="Richardson P."/>
        </authorList>
    </citation>
    <scope>NUCLEOTIDE SEQUENCE [LARGE SCALE GENOMIC DNA]</scope>
    <source>
        <strain>PA1</strain>
    </source>
</reference>
<sequence>MTAQTAPAFPHRHLLGIEGLSRPDIEALLERADAAVALSRQVEKKRTVLRGRTQINLFFEPSTRTQSSFELAGKRLGADVMNMSVASSSVKKGETLIDTAATLNAMRPDIIVVRHHAAGAVHLLARKVDCAVVNAGDGAHEHPTQALLDALTIRRNKGGIEGLQVAICGDVLHSRVARSNIILLQALGARVRVIGPSTLLPTGIERFGVEVFTDMRAGLKGCDIVMMLRLQRERMNGSFVPSVKEYFRYYGLDGDKLALAKPGALVMHPGPMNRGVEIASDIADGTQSLIREQVEMGVAVRMAVLEALATHLPNG</sequence>
<comment type="function">
    <text evidence="1">Catalyzes the condensation of carbamoyl phosphate and aspartate to form carbamoyl aspartate and inorganic phosphate, the committed step in the de novo pyrimidine nucleotide biosynthesis pathway.</text>
</comment>
<comment type="catalytic activity">
    <reaction evidence="1">
        <text>carbamoyl phosphate + L-aspartate = N-carbamoyl-L-aspartate + phosphate + H(+)</text>
        <dbReference type="Rhea" id="RHEA:20013"/>
        <dbReference type="ChEBI" id="CHEBI:15378"/>
        <dbReference type="ChEBI" id="CHEBI:29991"/>
        <dbReference type="ChEBI" id="CHEBI:32814"/>
        <dbReference type="ChEBI" id="CHEBI:43474"/>
        <dbReference type="ChEBI" id="CHEBI:58228"/>
        <dbReference type="EC" id="2.1.3.2"/>
    </reaction>
</comment>
<comment type="pathway">
    <text evidence="1">Pyrimidine metabolism; UMP biosynthesis via de novo pathway; (S)-dihydroorotate from bicarbonate: step 2/3.</text>
</comment>
<comment type="subunit">
    <text evidence="1">Heterododecamer (2C3:3R2) of six catalytic PyrB chains organized as two trimers (C3), and six regulatory PyrI chains organized as three dimers (R2).</text>
</comment>
<comment type="similarity">
    <text evidence="1">Belongs to the aspartate/ornithine carbamoyltransferase superfamily. ATCase family.</text>
</comment>
<feature type="chain" id="PRO_1000191910" description="Aspartate carbamoyltransferase catalytic subunit">
    <location>
        <begin position="1"/>
        <end position="315"/>
    </location>
</feature>
<feature type="binding site" evidence="1">
    <location>
        <position position="64"/>
    </location>
    <ligand>
        <name>carbamoyl phosphate</name>
        <dbReference type="ChEBI" id="CHEBI:58228"/>
    </ligand>
</feature>
<feature type="binding site" evidence="1">
    <location>
        <position position="65"/>
    </location>
    <ligand>
        <name>carbamoyl phosphate</name>
        <dbReference type="ChEBI" id="CHEBI:58228"/>
    </ligand>
</feature>
<feature type="binding site" evidence="1">
    <location>
        <position position="92"/>
    </location>
    <ligand>
        <name>L-aspartate</name>
        <dbReference type="ChEBI" id="CHEBI:29991"/>
    </ligand>
</feature>
<feature type="binding site" evidence="1">
    <location>
        <position position="114"/>
    </location>
    <ligand>
        <name>carbamoyl phosphate</name>
        <dbReference type="ChEBI" id="CHEBI:58228"/>
    </ligand>
</feature>
<feature type="binding site" evidence="1">
    <location>
        <position position="142"/>
    </location>
    <ligand>
        <name>carbamoyl phosphate</name>
        <dbReference type="ChEBI" id="CHEBI:58228"/>
    </ligand>
</feature>
<feature type="binding site" evidence="1">
    <location>
        <position position="145"/>
    </location>
    <ligand>
        <name>carbamoyl phosphate</name>
        <dbReference type="ChEBI" id="CHEBI:58228"/>
    </ligand>
</feature>
<feature type="binding site" evidence="1">
    <location>
        <position position="175"/>
    </location>
    <ligand>
        <name>L-aspartate</name>
        <dbReference type="ChEBI" id="CHEBI:29991"/>
    </ligand>
</feature>
<feature type="binding site" evidence="1">
    <location>
        <position position="229"/>
    </location>
    <ligand>
        <name>L-aspartate</name>
        <dbReference type="ChEBI" id="CHEBI:29991"/>
    </ligand>
</feature>
<feature type="binding site" evidence="1">
    <location>
        <position position="270"/>
    </location>
    <ligand>
        <name>carbamoyl phosphate</name>
        <dbReference type="ChEBI" id="CHEBI:58228"/>
    </ligand>
</feature>
<feature type="binding site" evidence="1">
    <location>
        <position position="271"/>
    </location>
    <ligand>
        <name>carbamoyl phosphate</name>
        <dbReference type="ChEBI" id="CHEBI:58228"/>
    </ligand>
</feature>
<name>PYRB_METEP</name>
<proteinExistence type="inferred from homology"/>
<evidence type="ECO:0000255" key="1">
    <source>
        <dbReference type="HAMAP-Rule" id="MF_00001"/>
    </source>
</evidence>
<dbReference type="EC" id="2.1.3.2" evidence="1"/>
<dbReference type="EMBL" id="CP000908">
    <property type="protein sequence ID" value="ABY31699.1"/>
    <property type="molecule type" value="Genomic_DNA"/>
</dbReference>
<dbReference type="RefSeq" id="WP_012254578.1">
    <property type="nucleotide sequence ID" value="NC_010172.1"/>
</dbReference>
<dbReference type="SMR" id="A9W737"/>
<dbReference type="KEGG" id="mex:Mext_3312"/>
<dbReference type="eggNOG" id="COG0540">
    <property type="taxonomic scope" value="Bacteria"/>
</dbReference>
<dbReference type="HOGENOM" id="CLU_043846_2_0_5"/>
<dbReference type="BioCyc" id="MEXT419610:MEXT_RS16640-MONOMER"/>
<dbReference type="UniPathway" id="UPA00070">
    <property type="reaction ID" value="UER00116"/>
</dbReference>
<dbReference type="GO" id="GO:0005829">
    <property type="term" value="C:cytosol"/>
    <property type="evidence" value="ECO:0007669"/>
    <property type="project" value="TreeGrafter"/>
</dbReference>
<dbReference type="GO" id="GO:0016597">
    <property type="term" value="F:amino acid binding"/>
    <property type="evidence" value="ECO:0007669"/>
    <property type="project" value="InterPro"/>
</dbReference>
<dbReference type="GO" id="GO:0004070">
    <property type="term" value="F:aspartate carbamoyltransferase activity"/>
    <property type="evidence" value="ECO:0007669"/>
    <property type="project" value="UniProtKB-UniRule"/>
</dbReference>
<dbReference type="GO" id="GO:0006207">
    <property type="term" value="P:'de novo' pyrimidine nucleobase biosynthetic process"/>
    <property type="evidence" value="ECO:0007669"/>
    <property type="project" value="InterPro"/>
</dbReference>
<dbReference type="GO" id="GO:0044205">
    <property type="term" value="P:'de novo' UMP biosynthetic process"/>
    <property type="evidence" value="ECO:0007669"/>
    <property type="project" value="UniProtKB-UniRule"/>
</dbReference>
<dbReference type="GO" id="GO:0006520">
    <property type="term" value="P:amino acid metabolic process"/>
    <property type="evidence" value="ECO:0007669"/>
    <property type="project" value="InterPro"/>
</dbReference>
<dbReference type="FunFam" id="3.40.50.1370:FF:000007">
    <property type="entry name" value="Aspartate carbamoyltransferase"/>
    <property type="match status" value="1"/>
</dbReference>
<dbReference type="Gene3D" id="3.40.50.1370">
    <property type="entry name" value="Aspartate/ornithine carbamoyltransferase"/>
    <property type="match status" value="2"/>
</dbReference>
<dbReference type="HAMAP" id="MF_00001">
    <property type="entry name" value="Asp_carb_tr"/>
    <property type="match status" value="1"/>
</dbReference>
<dbReference type="InterPro" id="IPR006132">
    <property type="entry name" value="Asp/Orn_carbamoyltranf_P-bd"/>
</dbReference>
<dbReference type="InterPro" id="IPR006130">
    <property type="entry name" value="Asp/Orn_carbamoylTrfase"/>
</dbReference>
<dbReference type="InterPro" id="IPR036901">
    <property type="entry name" value="Asp/Orn_carbamoylTrfase_sf"/>
</dbReference>
<dbReference type="InterPro" id="IPR002082">
    <property type="entry name" value="Asp_carbamoyltransf"/>
</dbReference>
<dbReference type="InterPro" id="IPR006131">
    <property type="entry name" value="Asp_carbamoyltransf_Asp/Orn-bd"/>
</dbReference>
<dbReference type="NCBIfam" id="TIGR00670">
    <property type="entry name" value="asp_carb_tr"/>
    <property type="match status" value="1"/>
</dbReference>
<dbReference type="NCBIfam" id="NF002032">
    <property type="entry name" value="PRK00856.1"/>
    <property type="match status" value="1"/>
</dbReference>
<dbReference type="PANTHER" id="PTHR45753:SF6">
    <property type="entry name" value="ASPARTATE CARBAMOYLTRANSFERASE"/>
    <property type="match status" value="1"/>
</dbReference>
<dbReference type="PANTHER" id="PTHR45753">
    <property type="entry name" value="ORNITHINE CARBAMOYLTRANSFERASE, MITOCHONDRIAL"/>
    <property type="match status" value="1"/>
</dbReference>
<dbReference type="Pfam" id="PF00185">
    <property type="entry name" value="OTCace"/>
    <property type="match status" value="1"/>
</dbReference>
<dbReference type="Pfam" id="PF02729">
    <property type="entry name" value="OTCace_N"/>
    <property type="match status" value="1"/>
</dbReference>
<dbReference type="PRINTS" id="PR00100">
    <property type="entry name" value="AOTCASE"/>
</dbReference>
<dbReference type="PRINTS" id="PR00101">
    <property type="entry name" value="ATCASE"/>
</dbReference>
<dbReference type="SUPFAM" id="SSF53671">
    <property type="entry name" value="Aspartate/ornithine carbamoyltransferase"/>
    <property type="match status" value="1"/>
</dbReference>
<dbReference type="PROSITE" id="PS00097">
    <property type="entry name" value="CARBAMOYLTRANSFERASE"/>
    <property type="match status" value="1"/>
</dbReference>
<organism>
    <name type="scientific">Methylorubrum extorquens (strain PA1)</name>
    <name type="common">Methylobacterium extorquens</name>
    <dbReference type="NCBI Taxonomy" id="419610"/>
    <lineage>
        <taxon>Bacteria</taxon>
        <taxon>Pseudomonadati</taxon>
        <taxon>Pseudomonadota</taxon>
        <taxon>Alphaproteobacteria</taxon>
        <taxon>Hyphomicrobiales</taxon>
        <taxon>Methylobacteriaceae</taxon>
        <taxon>Methylorubrum</taxon>
    </lineage>
</organism>
<protein>
    <recommendedName>
        <fullName evidence="1">Aspartate carbamoyltransferase catalytic subunit</fullName>
        <ecNumber evidence="1">2.1.3.2</ecNumber>
    </recommendedName>
    <alternativeName>
        <fullName evidence="1">Aspartate transcarbamylase</fullName>
        <shortName evidence="1">ATCase</shortName>
    </alternativeName>
</protein>